<protein>
    <recommendedName>
        <fullName evidence="1">NADH-quinone oxidoreductase subunit C</fullName>
        <ecNumber evidence="1">7.1.1.-</ecNumber>
    </recommendedName>
    <alternativeName>
        <fullName evidence="1">NADH dehydrogenase I subunit C</fullName>
    </alternativeName>
    <alternativeName>
        <fullName evidence="1">NDH-1 subunit C</fullName>
    </alternativeName>
</protein>
<feature type="chain" id="PRO_0000358077" description="NADH-quinone oxidoreductase subunit C">
    <location>
        <begin position="1"/>
        <end position="200"/>
    </location>
</feature>
<evidence type="ECO:0000255" key="1">
    <source>
        <dbReference type="HAMAP-Rule" id="MF_01357"/>
    </source>
</evidence>
<proteinExistence type="inferred from homology"/>
<keyword id="KW-0997">Cell inner membrane</keyword>
<keyword id="KW-1003">Cell membrane</keyword>
<keyword id="KW-0472">Membrane</keyword>
<keyword id="KW-0520">NAD</keyword>
<keyword id="KW-0874">Quinone</keyword>
<keyword id="KW-1278">Translocase</keyword>
<keyword id="KW-0813">Transport</keyword>
<keyword id="KW-0830">Ubiquinone</keyword>
<reference key="1">
    <citation type="submission" date="2007-03" db="EMBL/GenBank/DDBJ databases">
        <title>Complete sequence of chromosome 1 of Burkholderia vietnamiensis G4.</title>
        <authorList>
            <consortium name="US DOE Joint Genome Institute"/>
            <person name="Copeland A."/>
            <person name="Lucas S."/>
            <person name="Lapidus A."/>
            <person name="Barry K."/>
            <person name="Detter J.C."/>
            <person name="Glavina del Rio T."/>
            <person name="Hammon N."/>
            <person name="Israni S."/>
            <person name="Dalin E."/>
            <person name="Tice H."/>
            <person name="Pitluck S."/>
            <person name="Chain P."/>
            <person name="Malfatti S."/>
            <person name="Shin M."/>
            <person name="Vergez L."/>
            <person name="Schmutz J."/>
            <person name="Larimer F."/>
            <person name="Land M."/>
            <person name="Hauser L."/>
            <person name="Kyrpides N."/>
            <person name="Tiedje J."/>
            <person name="Richardson P."/>
        </authorList>
    </citation>
    <scope>NUCLEOTIDE SEQUENCE [LARGE SCALE GENOMIC DNA]</scope>
    <source>
        <strain>G4 / LMG 22486</strain>
    </source>
</reference>
<comment type="function">
    <text evidence="1">NDH-1 shuttles electrons from NADH, via FMN and iron-sulfur (Fe-S) centers, to quinones in the respiratory chain. The immediate electron acceptor for the enzyme in this species is believed to be ubiquinone. Couples the redox reaction to proton translocation (for every two electrons transferred, four hydrogen ions are translocated across the cytoplasmic membrane), and thus conserves the redox energy in a proton gradient.</text>
</comment>
<comment type="catalytic activity">
    <reaction evidence="1">
        <text>a quinone + NADH + 5 H(+)(in) = a quinol + NAD(+) + 4 H(+)(out)</text>
        <dbReference type="Rhea" id="RHEA:57888"/>
        <dbReference type="ChEBI" id="CHEBI:15378"/>
        <dbReference type="ChEBI" id="CHEBI:24646"/>
        <dbReference type="ChEBI" id="CHEBI:57540"/>
        <dbReference type="ChEBI" id="CHEBI:57945"/>
        <dbReference type="ChEBI" id="CHEBI:132124"/>
    </reaction>
</comment>
<comment type="subunit">
    <text evidence="1">NDH-1 is composed of 14 different subunits. Subunits NuoB, C, D, E, F, and G constitute the peripheral sector of the complex.</text>
</comment>
<comment type="subcellular location">
    <subcellularLocation>
        <location evidence="1">Cell inner membrane</location>
        <topology evidence="1">Peripheral membrane protein</topology>
        <orientation evidence="1">Cytoplasmic side</orientation>
    </subcellularLocation>
</comment>
<comment type="similarity">
    <text evidence="1">Belongs to the complex I 30 kDa subunit family.</text>
</comment>
<gene>
    <name evidence="1" type="primary">nuoC</name>
    <name type="ordered locus">Bcep1808_2332</name>
</gene>
<dbReference type="EC" id="7.1.1.-" evidence="1"/>
<dbReference type="EMBL" id="CP000614">
    <property type="protein sequence ID" value="ABO55331.1"/>
    <property type="molecule type" value="Genomic_DNA"/>
</dbReference>
<dbReference type="SMR" id="A4JGC8"/>
<dbReference type="KEGG" id="bvi:Bcep1808_2332"/>
<dbReference type="eggNOG" id="COG0852">
    <property type="taxonomic scope" value="Bacteria"/>
</dbReference>
<dbReference type="HOGENOM" id="CLU_042628_2_1_4"/>
<dbReference type="Proteomes" id="UP000002287">
    <property type="component" value="Chromosome 1"/>
</dbReference>
<dbReference type="GO" id="GO:0005886">
    <property type="term" value="C:plasma membrane"/>
    <property type="evidence" value="ECO:0007669"/>
    <property type="project" value="UniProtKB-SubCell"/>
</dbReference>
<dbReference type="GO" id="GO:0008137">
    <property type="term" value="F:NADH dehydrogenase (ubiquinone) activity"/>
    <property type="evidence" value="ECO:0007669"/>
    <property type="project" value="InterPro"/>
</dbReference>
<dbReference type="GO" id="GO:0050136">
    <property type="term" value="F:NADH:ubiquinone reductase (non-electrogenic) activity"/>
    <property type="evidence" value="ECO:0007669"/>
    <property type="project" value="UniProtKB-UniRule"/>
</dbReference>
<dbReference type="GO" id="GO:0048038">
    <property type="term" value="F:quinone binding"/>
    <property type="evidence" value="ECO:0007669"/>
    <property type="project" value="UniProtKB-KW"/>
</dbReference>
<dbReference type="Gene3D" id="3.30.460.80">
    <property type="entry name" value="NADH:ubiquinone oxidoreductase, 30kDa subunit"/>
    <property type="match status" value="1"/>
</dbReference>
<dbReference type="HAMAP" id="MF_01357">
    <property type="entry name" value="NDH1_NuoC"/>
    <property type="match status" value="1"/>
</dbReference>
<dbReference type="InterPro" id="IPR010218">
    <property type="entry name" value="NADH_DH_suC"/>
</dbReference>
<dbReference type="InterPro" id="IPR037232">
    <property type="entry name" value="NADH_quin_OxRdtase_su_C/D-like"/>
</dbReference>
<dbReference type="InterPro" id="IPR001268">
    <property type="entry name" value="NADH_UbQ_OxRdtase_30kDa_su"/>
</dbReference>
<dbReference type="InterPro" id="IPR020396">
    <property type="entry name" value="NADH_UbQ_OxRdtase_CS"/>
</dbReference>
<dbReference type="NCBIfam" id="TIGR01961">
    <property type="entry name" value="NuoC_fam"/>
    <property type="match status" value="1"/>
</dbReference>
<dbReference type="NCBIfam" id="NF004730">
    <property type="entry name" value="PRK06074.1-1"/>
    <property type="match status" value="1"/>
</dbReference>
<dbReference type="PANTHER" id="PTHR10884:SF14">
    <property type="entry name" value="NADH DEHYDROGENASE [UBIQUINONE] IRON-SULFUR PROTEIN 3, MITOCHONDRIAL"/>
    <property type="match status" value="1"/>
</dbReference>
<dbReference type="PANTHER" id="PTHR10884">
    <property type="entry name" value="NADH DEHYDROGENASE UBIQUINONE IRON-SULFUR PROTEIN 3"/>
    <property type="match status" value="1"/>
</dbReference>
<dbReference type="Pfam" id="PF00329">
    <property type="entry name" value="Complex1_30kDa"/>
    <property type="match status" value="1"/>
</dbReference>
<dbReference type="SUPFAM" id="SSF143243">
    <property type="entry name" value="Nqo5-like"/>
    <property type="match status" value="1"/>
</dbReference>
<dbReference type="PROSITE" id="PS00542">
    <property type="entry name" value="COMPLEX1_30K"/>
    <property type="match status" value="1"/>
</dbReference>
<accession>A4JGC8</accession>
<name>NUOC_BURVG</name>
<organism>
    <name type="scientific">Burkholderia vietnamiensis (strain G4 / LMG 22486)</name>
    <name type="common">Burkholderia cepacia (strain R1808)</name>
    <dbReference type="NCBI Taxonomy" id="269482"/>
    <lineage>
        <taxon>Bacteria</taxon>
        <taxon>Pseudomonadati</taxon>
        <taxon>Pseudomonadota</taxon>
        <taxon>Betaproteobacteria</taxon>
        <taxon>Burkholderiales</taxon>
        <taxon>Burkholderiaceae</taxon>
        <taxon>Burkholderia</taxon>
        <taxon>Burkholderia cepacia complex</taxon>
    </lineage>
</organism>
<sequence>MASKIETLKANLEAALGARVVSLTEAIGELTLVVKASDYLEVAKTLRDDPKLRFEQLIDLCGIDYQTYGDGAYDGPRFAAVSQLLSVTNNWRLRLRVFAPDDDLPIVPSLVDTWSSSNWYEREAFDLYGLVFEGHPDLRRLLTDYGFIGHPFRKDFPVSGYVEMRYDPEEKRVVYQPVTIEPREITPRVIREDRYGGLKH</sequence>